<feature type="chain" id="PRO_1000057041" description="Argininosuccinate synthase">
    <location>
        <begin position="1"/>
        <end position="404"/>
    </location>
</feature>
<feature type="binding site" evidence="1">
    <location>
        <begin position="10"/>
        <end position="18"/>
    </location>
    <ligand>
        <name>ATP</name>
        <dbReference type="ChEBI" id="CHEBI:30616"/>
    </ligand>
</feature>
<feature type="binding site" evidence="1">
    <location>
        <position position="38"/>
    </location>
    <ligand>
        <name>ATP</name>
        <dbReference type="ChEBI" id="CHEBI:30616"/>
    </ligand>
</feature>
<feature type="binding site" evidence="1">
    <location>
        <position position="89"/>
    </location>
    <ligand>
        <name>L-citrulline</name>
        <dbReference type="ChEBI" id="CHEBI:57743"/>
    </ligand>
</feature>
<feature type="binding site" evidence="1">
    <location>
        <position position="119"/>
    </location>
    <ligand>
        <name>ATP</name>
        <dbReference type="ChEBI" id="CHEBI:30616"/>
    </ligand>
</feature>
<feature type="binding site" evidence="1">
    <location>
        <position position="121"/>
    </location>
    <ligand>
        <name>L-aspartate</name>
        <dbReference type="ChEBI" id="CHEBI:29991"/>
    </ligand>
</feature>
<feature type="binding site" evidence="1">
    <location>
        <position position="125"/>
    </location>
    <ligand>
        <name>L-aspartate</name>
        <dbReference type="ChEBI" id="CHEBI:29991"/>
    </ligand>
</feature>
<feature type="binding site" evidence="1">
    <location>
        <position position="125"/>
    </location>
    <ligand>
        <name>L-citrulline</name>
        <dbReference type="ChEBI" id="CHEBI:57743"/>
    </ligand>
</feature>
<feature type="binding site" evidence="1">
    <location>
        <position position="126"/>
    </location>
    <ligand>
        <name>L-aspartate</name>
        <dbReference type="ChEBI" id="CHEBI:29991"/>
    </ligand>
</feature>
<feature type="binding site" evidence="1">
    <location>
        <position position="129"/>
    </location>
    <ligand>
        <name>L-citrulline</name>
        <dbReference type="ChEBI" id="CHEBI:57743"/>
    </ligand>
</feature>
<feature type="binding site" evidence="1">
    <location>
        <position position="177"/>
    </location>
    <ligand>
        <name>L-citrulline</name>
        <dbReference type="ChEBI" id="CHEBI:57743"/>
    </ligand>
</feature>
<feature type="binding site" evidence="1">
    <location>
        <position position="186"/>
    </location>
    <ligand>
        <name>L-citrulline</name>
        <dbReference type="ChEBI" id="CHEBI:57743"/>
    </ligand>
</feature>
<feature type="binding site" evidence="1">
    <location>
        <position position="262"/>
    </location>
    <ligand>
        <name>L-citrulline</name>
        <dbReference type="ChEBI" id="CHEBI:57743"/>
    </ligand>
</feature>
<feature type="binding site" evidence="1">
    <location>
        <position position="274"/>
    </location>
    <ligand>
        <name>L-citrulline</name>
        <dbReference type="ChEBI" id="CHEBI:57743"/>
    </ligand>
</feature>
<comment type="catalytic activity">
    <reaction evidence="1">
        <text>L-citrulline + L-aspartate + ATP = 2-(N(omega)-L-arginino)succinate + AMP + diphosphate + H(+)</text>
        <dbReference type="Rhea" id="RHEA:10932"/>
        <dbReference type="ChEBI" id="CHEBI:15378"/>
        <dbReference type="ChEBI" id="CHEBI:29991"/>
        <dbReference type="ChEBI" id="CHEBI:30616"/>
        <dbReference type="ChEBI" id="CHEBI:33019"/>
        <dbReference type="ChEBI" id="CHEBI:57472"/>
        <dbReference type="ChEBI" id="CHEBI:57743"/>
        <dbReference type="ChEBI" id="CHEBI:456215"/>
        <dbReference type="EC" id="6.3.4.5"/>
    </reaction>
</comment>
<comment type="pathway">
    <text evidence="1">Amino-acid biosynthesis; L-arginine biosynthesis; L-arginine from L-ornithine and carbamoyl phosphate: step 2/3.</text>
</comment>
<comment type="subunit">
    <text evidence="1">Homotetramer.</text>
</comment>
<comment type="subcellular location">
    <subcellularLocation>
        <location evidence="1">Cytoplasm</location>
    </subcellularLocation>
</comment>
<comment type="similarity">
    <text evidence="1">Belongs to the argininosuccinate synthase family. Type 1 subfamily.</text>
</comment>
<sequence>MQQVKKVVLAYSGGVDTSVCIPYLKKEYGISEVITFVADLGQGEDLELIRQKALNSGASQSIVGNLVNSFVERYAFPAIRANALYLDKYPLSTALARPLIAENLVNIAREFSADAVAHGCTGKGNDQVRFDLAINALGPDLKIITPAREWNMSREEAIIYGEKFGIPAPVSKKSPYSIDVNLLGRSIEAGILEDPMQEAPEDIFAMTSSIDNSPDSPLDIEIIFKNGFPVGINDEFLTPVEIIKKANVLAGEHGYGRIDMIEDRVVGIKSREIYETPGLLLLIKAHKELESITLNPDIVDFKGIVEKKWGQIVYQGFWFGPLKDSLDAFISSTQTSVNGRVKIRLYKGNAIVIGRMSENNSLYRDDLATYSKDDVFKHSLAEGFIYMWGMSNKIWAELNSKTTD</sequence>
<protein>
    <recommendedName>
        <fullName evidence="1">Argininosuccinate synthase</fullName>
        <ecNumber evidence="1">6.3.4.5</ecNumber>
    </recommendedName>
    <alternativeName>
        <fullName evidence="1">Citrulline--aspartate ligase</fullName>
    </alternativeName>
</protein>
<accession>A8G7L2</accession>
<dbReference type="EC" id="6.3.4.5" evidence="1"/>
<dbReference type="EMBL" id="CP000825">
    <property type="protein sequence ID" value="ABV51593.1"/>
    <property type="molecule type" value="Genomic_DNA"/>
</dbReference>
<dbReference type="RefSeq" id="WP_012008580.1">
    <property type="nucleotide sequence ID" value="NC_009840.1"/>
</dbReference>
<dbReference type="SMR" id="A8G7L2"/>
<dbReference type="STRING" id="93060.P9215_19801"/>
<dbReference type="KEGG" id="pmh:P9215_19801"/>
<dbReference type="eggNOG" id="COG0137">
    <property type="taxonomic scope" value="Bacteria"/>
</dbReference>
<dbReference type="HOGENOM" id="CLU_032784_4_2_3"/>
<dbReference type="OrthoDB" id="9801641at2"/>
<dbReference type="UniPathway" id="UPA00068">
    <property type="reaction ID" value="UER00113"/>
</dbReference>
<dbReference type="Proteomes" id="UP000002014">
    <property type="component" value="Chromosome"/>
</dbReference>
<dbReference type="GO" id="GO:0005737">
    <property type="term" value="C:cytoplasm"/>
    <property type="evidence" value="ECO:0007669"/>
    <property type="project" value="UniProtKB-SubCell"/>
</dbReference>
<dbReference type="GO" id="GO:0004055">
    <property type="term" value="F:argininosuccinate synthase activity"/>
    <property type="evidence" value="ECO:0007669"/>
    <property type="project" value="UniProtKB-UniRule"/>
</dbReference>
<dbReference type="GO" id="GO:0005524">
    <property type="term" value="F:ATP binding"/>
    <property type="evidence" value="ECO:0007669"/>
    <property type="project" value="UniProtKB-UniRule"/>
</dbReference>
<dbReference type="GO" id="GO:0000053">
    <property type="term" value="P:argininosuccinate metabolic process"/>
    <property type="evidence" value="ECO:0007669"/>
    <property type="project" value="TreeGrafter"/>
</dbReference>
<dbReference type="GO" id="GO:0006526">
    <property type="term" value="P:L-arginine biosynthetic process"/>
    <property type="evidence" value="ECO:0007669"/>
    <property type="project" value="UniProtKB-UniRule"/>
</dbReference>
<dbReference type="GO" id="GO:0000050">
    <property type="term" value="P:urea cycle"/>
    <property type="evidence" value="ECO:0007669"/>
    <property type="project" value="TreeGrafter"/>
</dbReference>
<dbReference type="CDD" id="cd01999">
    <property type="entry name" value="ASS"/>
    <property type="match status" value="1"/>
</dbReference>
<dbReference type="FunFam" id="3.40.50.620:FF:000019">
    <property type="entry name" value="Argininosuccinate synthase"/>
    <property type="match status" value="1"/>
</dbReference>
<dbReference type="FunFam" id="3.90.1260.10:FF:000007">
    <property type="entry name" value="Argininosuccinate synthase"/>
    <property type="match status" value="1"/>
</dbReference>
<dbReference type="Gene3D" id="3.90.1260.10">
    <property type="entry name" value="Argininosuccinate synthetase, chain A, domain 2"/>
    <property type="match status" value="1"/>
</dbReference>
<dbReference type="Gene3D" id="3.40.50.620">
    <property type="entry name" value="HUPs"/>
    <property type="match status" value="1"/>
</dbReference>
<dbReference type="Gene3D" id="1.20.5.470">
    <property type="entry name" value="Single helix bin"/>
    <property type="match status" value="1"/>
</dbReference>
<dbReference type="HAMAP" id="MF_00005">
    <property type="entry name" value="Arg_succ_synth_type1"/>
    <property type="match status" value="1"/>
</dbReference>
<dbReference type="InterPro" id="IPR048268">
    <property type="entry name" value="Arginosuc_syn_C"/>
</dbReference>
<dbReference type="InterPro" id="IPR048267">
    <property type="entry name" value="Arginosuc_syn_N"/>
</dbReference>
<dbReference type="InterPro" id="IPR001518">
    <property type="entry name" value="Arginosuc_synth"/>
</dbReference>
<dbReference type="InterPro" id="IPR018223">
    <property type="entry name" value="Arginosuc_synth_CS"/>
</dbReference>
<dbReference type="InterPro" id="IPR023434">
    <property type="entry name" value="Arginosuc_synth_type_1_subfam"/>
</dbReference>
<dbReference type="InterPro" id="IPR024074">
    <property type="entry name" value="AS_cat/multimer_dom_body"/>
</dbReference>
<dbReference type="InterPro" id="IPR014729">
    <property type="entry name" value="Rossmann-like_a/b/a_fold"/>
</dbReference>
<dbReference type="NCBIfam" id="TIGR00032">
    <property type="entry name" value="argG"/>
    <property type="match status" value="1"/>
</dbReference>
<dbReference type="NCBIfam" id="NF001770">
    <property type="entry name" value="PRK00509.1"/>
    <property type="match status" value="1"/>
</dbReference>
<dbReference type="PANTHER" id="PTHR11587">
    <property type="entry name" value="ARGININOSUCCINATE SYNTHASE"/>
    <property type="match status" value="1"/>
</dbReference>
<dbReference type="PANTHER" id="PTHR11587:SF2">
    <property type="entry name" value="ARGININOSUCCINATE SYNTHASE"/>
    <property type="match status" value="1"/>
</dbReference>
<dbReference type="Pfam" id="PF20979">
    <property type="entry name" value="Arginosuc_syn_C"/>
    <property type="match status" value="1"/>
</dbReference>
<dbReference type="Pfam" id="PF00764">
    <property type="entry name" value="Arginosuc_synth"/>
    <property type="match status" value="1"/>
</dbReference>
<dbReference type="SUPFAM" id="SSF52402">
    <property type="entry name" value="Adenine nucleotide alpha hydrolases-like"/>
    <property type="match status" value="1"/>
</dbReference>
<dbReference type="SUPFAM" id="SSF69864">
    <property type="entry name" value="Argininosuccinate synthetase, C-terminal domain"/>
    <property type="match status" value="1"/>
</dbReference>
<dbReference type="PROSITE" id="PS00564">
    <property type="entry name" value="ARGININOSUCCIN_SYN_1"/>
    <property type="match status" value="1"/>
</dbReference>
<dbReference type="PROSITE" id="PS00565">
    <property type="entry name" value="ARGININOSUCCIN_SYN_2"/>
    <property type="match status" value="1"/>
</dbReference>
<proteinExistence type="inferred from homology"/>
<keyword id="KW-0028">Amino-acid biosynthesis</keyword>
<keyword id="KW-0055">Arginine biosynthesis</keyword>
<keyword id="KW-0067">ATP-binding</keyword>
<keyword id="KW-0963">Cytoplasm</keyword>
<keyword id="KW-0436">Ligase</keyword>
<keyword id="KW-0547">Nucleotide-binding</keyword>
<gene>
    <name evidence="1" type="primary">argG</name>
    <name type="ordered locus">P9215_19801</name>
</gene>
<name>ASSY_PROM2</name>
<evidence type="ECO:0000255" key="1">
    <source>
        <dbReference type="HAMAP-Rule" id="MF_00005"/>
    </source>
</evidence>
<reference key="1">
    <citation type="journal article" date="2007" name="PLoS Genet.">
        <title>Patterns and implications of gene gain and loss in the evolution of Prochlorococcus.</title>
        <authorList>
            <person name="Kettler G.C."/>
            <person name="Martiny A.C."/>
            <person name="Huang K."/>
            <person name="Zucker J."/>
            <person name="Coleman M.L."/>
            <person name="Rodrigue S."/>
            <person name="Chen F."/>
            <person name="Lapidus A."/>
            <person name="Ferriera S."/>
            <person name="Johnson J."/>
            <person name="Steglich C."/>
            <person name="Church G.M."/>
            <person name="Richardson P."/>
            <person name="Chisholm S.W."/>
        </authorList>
    </citation>
    <scope>NUCLEOTIDE SEQUENCE [LARGE SCALE GENOMIC DNA]</scope>
    <source>
        <strain>MIT 9215</strain>
    </source>
</reference>
<organism>
    <name type="scientific">Prochlorococcus marinus (strain MIT 9215)</name>
    <dbReference type="NCBI Taxonomy" id="93060"/>
    <lineage>
        <taxon>Bacteria</taxon>
        <taxon>Bacillati</taxon>
        <taxon>Cyanobacteriota</taxon>
        <taxon>Cyanophyceae</taxon>
        <taxon>Synechococcales</taxon>
        <taxon>Prochlorococcaceae</taxon>
        <taxon>Prochlorococcus</taxon>
    </lineage>
</organism>